<proteinExistence type="inferred from homology"/>
<evidence type="ECO:0000250" key="1"/>
<evidence type="ECO:0000250" key="2">
    <source>
        <dbReference type="UniProtKB" id="B4F795"/>
    </source>
</evidence>
<evidence type="ECO:0000250" key="3">
    <source>
        <dbReference type="UniProtKB" id="Q8IWA5"/>
    </source>
</evidence>
<evidence type="ECO:0000255" key="4"/>
<evidence type="ECO:0000305" key="5"/>
<sequence length="706" mass="80238">MGGERQHYYGKHGTPQKYDPTFKGPIYHRGCTDVICCVFLLLAIVGYVAVGIIAWTHGDPRKVIYPTDSRGEFCGQKGTKNANKSYLFYFNIVKCASPLVLLEFQCPTPQICVEKCPNRYLTYLKAHGTQEFEYYKQFCVPGFKQNKAVTEVLRDGDCPAVLIPSKPLVQRCFPAIHAHKGVLMVGNETSYEDGHGFRKNITDLVEGAKKANGILEARHLAMRIFEDYTVSWYWIIIGLVIAMVLSLLFIILLRFLAGIMVWVMIVMVILVLGYGIFHCYMEYSRLRGEAGSDISLVDLGFQTDLRVYLHLRQTWMAFMIILSILEVIIILLLIFLRKRILIAIALIKEASRAVGYVMCSMLYPLVTFLLLCLCIAYWASTAIFLSTSNEAVYKIFSDTDCQAVGKTCNPENFSSSSEFHLCPGAHCQFAFYGGESTYHRALLGLQIFNAFMFFWLANFVLALGQVTLAGAFASYYWALKKPDDLPAFPLFSAFGRALRYHTGSLAFGSLLLAIVQIIRVMLEYLDQRLKAAENKFAKFLMTCLKCCFWCLEKFIKFLNRNAYIMIAIYGTNFCTSARNAFFLLMRNIIRVAVLDKVTDFLFLLGKLLIVGSVGILAFFFFTHRIRIVQDTAPPLNYYWVPILTVIVGSYLIAHGFFSVYGMCVDTLFLCFLEDLERNDGSMERPYFMSPTLKRLLNKTNRKPAES</sequence>
<name>CTL2_PIG</name>
<reference key="1">
    <citation type="submission" date="2009-11" db="EMBL/GenBank/DDBJ databases">
        <authorList>
            <consortium name="Porcine genome sequencing project"/>
        </authorList>
    </citation>
    <scope>NUCLEOTIDE SEQUENCE [LARGE SCALE GENOMIC DNA]</scope>
</reference>
<organism>
    <name type="scientific">Sus scrofa</name>
    <name type="common">Pig</name>
    <dbReference type="NCBI Taxonomy" id="9823"/>
    <lineage>
        <taxon>Eukaryota</taxon>
        <taxon>Metazoa</taxon>
        <taxon>Chordata</taxon>
        <taxon>Craniata</taxon>
        <taxon>Vertebrata</taxon>
        <taxon>Euteleostomi</taxon>
        <taxon>Mammalia</taxon>
        <taxon>Eutheria</taxon>
        <taxon>Laurasiatheria</taxon>
        <taxon>Artiodactyla</taxon>
        <taxon>Suina</taxon>
        <taxon>Suidae</taxon>
        <taxon>Sus</taxon>
    </lineage>
</organism>
<keyword id="KW-0050">Antiport</keyword>
<keyword id="KW-1003">Cell membrane</keyword>
<keyword id="KW-0325">Glycoprotein</keyword>
<keyword id="KW-0472">Membrane</keyword>
<keyword id="KW-0496">Mitochondrion</keyword>
<keyword id="KW-1000">Mitochondrion outer membrane</keyword>
<keyword id="KW-0597">Phosphoprotein</keyword>
<keyword id="KW-1185">Reference proteome</keyword>
<keyword id="KW-0812">Transmembrane</keyword>
<keyword id="KW-1133">Transmembrane helix</keyword>
<keyword id="KW-0813">Transport</keyword>
<comment type="function">
    <text evidence="3">Choline/H+ antiporter, mainly in mitochodria. Also acts as a low-affinity ethanolamine/H+ antiporter, regulating the supply of extracellular ethanolamine (Etn) for the CDP-Etn pathway, redistribute intracellular Etn and balance the CDP-Cho and CDP-Etn arms of the Kennedy pathway.</text>
</comment>
<comment type="catalytic activity">
    <reaction evidence="3">
        <text>choline(out) + n H(+)(in) = choline(in) + n H(+)(out)</text>
        <dbReference type="Rhea" id="RHEA:75463"/>
        <dbReference type="ChEBI" id="CHEBI:15354"/>
        <dbReference type="ChEBI" id="CHEBI:15378"/>
    </reaction>
</comment>
<comment type="catalytic activity">
    <reaction evidence="3">
        <text>ethanolamine(out) + n H(+)(in) = ethanolamine(in) + n H(+)(out)</text>
        <dbReference type="Rhea" id="RHEA:75467"/>
        <dbReference type="ChEBI" id="CHEBI:15378"/>
        <dbReference type="ChEBI" id="CHEBI:57603"/>
    </reaction>
</comment>
<comment type="subunit">
    <text evidence="3">Interacts with COCH.</text>
</comment>
<comment type="subcellular location">
    <subcellularLocation>
        <location evidence="3">Cell membrane</location>
        <topology evidence="4">Multi-pass membrane protein</topology>
    </subcellularLocation>
    <subcellularLocation>
        <location evidence="3">Mitochondrion outer membrane</location>
        <topology evidence="4">Multi-pass membrane protein</topology>
    </subcellularLocation>
    <text evidence="2">Mainly expressed in mitochondria.</text>
</comment>
<comment type="PTM">
    <text evidence="1">N-glycosylated.</text>
</comment>
<comment type="similarity">
    <text evidence="5">Belongs to the CTL (choline transporter-like) family.</text>
</comment>
<protein>
    <recommendedName>
        <fullName>Choline transporter-like protein 2</fullName>
    </recommendedName>
    <alternativeName>
        <fullName>Solute carrier family 44 member 2</fullName>
    </alternativeName>
</protein>
<feature type="chain" id="PRO_0000412768" description="Choline transporter-like protein 2">
    <location>
        <begin position="1"/>
        <end position="706"/>
    </location>
</feature>
<feature type="topological domain" description="Cytoplasmic" evidence="4">
    <location>
        <begin position="1"/>
        <end position="33"/>
    </location>
</feature>
<feature type="transmembrane region" description="Helical" evidence="4">
    <location>
        <begin position="34"/>
        <end position="54"/>
    </location>
</feature>
<feature type="topological domain" description="Extracellular" evidence="4">
    <location>
        <begin position="55"/>
        <end position="232"/>
    </location>
</feature>
<feature type="transmembrane region" description="Helical" evidence="4">
    <location>
        <begin position="233"/>
        <end position="253"/>
    </location>
</feature>
<feature type="topological domain" description="Cytoplasmic" evidence="4">
    <location>
        <begin position="254"/>
        <end position="256"/>
    </location>
</feature>
<feature type="transmembrane region" description="Helical" evidence="4">
    <location>
        <begin position="257"/>
        <end position="277"/>
    </location>
</feature>
<feature type="topological domain" description="Extracellular" evidence="4">
    <location>
        <begin position="278"/>
        <end position="315"/>
    </location>
</feature>
<feature type="transmembrane region" description="Helical" evidence="4">
    <location>
        <begin position="316"/>
        <end position="336"/>
    </location>
</feature>
<feature type="topological domain" description="Cytoplasmic" evidence="4">
    <location>
        <begin position="337"/>
        <end position="364"/>
    </location>
</feature>
<feature type="transmembrane region" description="Helical" evidence="4">
    <location>
        <begin position="365"/>
        <end position="385"/>
    </location>
</feature>
<feature type="topological domain" description="Extracellular" evidence="4">
    <location>
        <begin position="386"/>
        <end position="440"/>
    </location>
</feature>
<feature type="transmembrane region" description="Helical" evidence="4">
    <location>
        <begin position="441"/>
        <end position="461"/>
    </location>
</feature>
<feature type="topological domain" description="Cytoplasmic" evidence="4">
    <location>
        <begin position="462"/>
        <end position="504"/>
    </location>
</feature>
<feature type="transmembrane region" description="Helical" evidence="4">
    <location>
        <begin position="505"/>
        <end position="525"/>
    </location>
</feature>
<feature type="topological domain" description="Extracellular" evidence="4">
    <location>
        <begin position="526"/>
        <end position="563"/>
    </location>
</feature>
<feature type="transmembrane region" description="Helical" evidence="4">
    <location>
        <begin position="564"/>
        <end position="584"/>
    </location>
</feature>
<feature type="topological domain" description="Cytoplasmic" evidence="4">
    <location>
        <begin position="585"/>
        <end position="599"/>
    </location>
</feature>
<feature type="transmembrane region" description="Helical" evidence="4">
    <location>
        <begin position="600"/>
        <end position="620"/>
    </location>
</feature>
<feature type="topological domain" description="Extracellular" evidence="4">
    <location>
        <begin position="621"/>
        <end position="638"/>
    </location>
</feature>
<feature type="transmembrane region" description="Helical" evidence="4">
    <location>
        <begin position="639"/>
        <end position="659"/>
    </location>
</feature>
<feature type="topological domain" description="Cytoplasmic" evidence="4">
    <location>
        <begin position="660"/>
        <end position="706"/>
    </location>
</feature>
<feature type="modified residue" description="Phosphothreonine" evidence="3">
    <location>
        <position position="14"/>
    </location>
</feature>
<feature type="glycosylation site" description="N-linked (GlcNAc...) asparagine" evidence="4">
    <location>
        <position position="187"/>
    </location>
</feature>
<feature type="glycosylation site" description="N-linked (GlcNAc...) asparagine" evidence="4">
    <location>
        <position position="200"/>
    </location>
</feature>
<dbReference type="EMBL" id="CU993813">
    <property type="status" value="NOT_ANNOTATED_CDS"/>
    <property type="molecule type" value="Genomic_DNA"/>
</dbReference>
<dbReference type="RefSeq" id="XP_003123258.1">
    <property type="nucleotide sequence ID" value="XM_003123210.4"/>
</dbReference>
<dbReference type="SMR" id="F1S584"/>
<dbReference type="FunCoup" id="F1S584">
    <property type="interactions" value="822"/>
</dbReference>
<dbReference type="STRING" id="9823.ENSSSCP00000068093"/>
<dbReference type="GlyCosmos" id="F1S584">
    <property type="glycosylation" value="2 sites, No reported glycans"/>
</dbReference>
<dbReference type="GlyGen" id="F1S584">
    <property type="glycosylation" value="3 sites"/>
</dbReference>
<dbReference type="PaxDb" id="9823-ENSSSCP00000014493"/>
<dbReference type="PeptideAtlas" id="F1S584"/>
<dbReference type="Ensembl" id="ENSSSCT00015098292.1">
    <property type="protein sequence ID" value="ENSSSCP00015040450.1"/>
    <property type="gene ID" value="ENSSSCG00015067234.1"/>
</dbReference>
<dbReference type="Ensembl" id="ENSSSCT00030037402.1">
    <property type="protein sequence ID" value="ENSSSCP00030017118.1"/>
    <property type="gene ID" value="ENSSSCG00030026479.1"/>
</dbReference>
<dbReference type="Ensembl" id="ENSSSCT00035035754.1">
    <property type="protein sequence ID" value="ENSSSCP00035014194.1"/>
    <property type="gene ID" value="ENSSSCG00035026908.1"/>
</dbReference>
<dbReference type="Ensembl" id="ENSSSCT00040005600.1">
    <property type="protein sequence ID" value="ENSSSCP00040002097.1"/>
    <property type="gene ID" value="ENSSSCG00040004220.1"/>
</dbReference>
<dbReference type="Ensembl" id="ENSSSCT00045042331.1">
    <property type="protein sequence ID" value="ENSSSCP00045029382.1"/>
    <property type="gene ID" value="ENSSSCG00045023968.1"/>
</dbReference>
<dbReference type="Ensembl" id="ENSSSCT00070045933.1">
    <property type="protein sequence ID" value="ENSSSCP00070038733.1"/>
    <property type="gene ID" value="ENSSSCG00070022938.1"/>
</dbReference>
<dbReference type="GeneID" id="100524730"/>
<dbReference type="KEGG" id="ssc:100524730"/>
<dbReference type="CTD" id="57153"/>
<dbReference type="eggNOG" id="KOG1362">
    <property type="taxonomic scope" value="Eukaryota"/>
</dbReference>
<dbReference type="HOGENOM" id="CLU_017181_3_1_1"/>
<dbReference type="InParanoid" id="F1S584"/>
<dbReference type="OrthoDB" id="420519at2759"/>
<dbReference type="TreeFam" id="TF313325"/>
<dbReference type="Reactome" id="R-SSC-1483191">
    <property type="pathway name" value="Synthesis of PC"/>
</dbReference>
<dbReference type="Reactome" id="R-SSC-425366">
    <property type="pathway name" value="Transport of bile salts and organic acids, metal ions and amine compounds"/>
</dbReference>
<dbReference type="Reactome" id="R-SSC-6798695">
    <property type="pathway name" value="Neutrophil degranulation"/>
</dbReference>
<dbReference type="ChiTaRS" id="SLC44A2">
    <property type="organism name" value="pig"/>
</dbReference>
<dbReference type="Proteomes" id="UP000008227">
    <property type="component" value="Unplaced"/>
</dbReference>
<dbReference type="Proteomes" id="UP000314985">
    <property type="component" value="Chromosome 2"/>
</dbReference>
<dbReference type="Proteomes" id="UP000694570">
    <property type="component" value="Unplaced"/>
</dbReference>
<dbReference type="Proteomes" id="UP000694571">
    <property type="component" value="Unplaced"/>
</dbReference>
<dbReference type="Proteomes" id="UP000694720">
    <property type="component" value="Unplaced"/>
</dbReference>
<dbReference type="Proteomes" id="UP000694722">
    <property type="component" value="Unplaced"/>
</dbReference>
<dbReference type="Proteomes" id="UP000694723">
    <property type="component" value="Unplaced"/>
</dbReference>
<dbReference type="Proteomes" id="UP000694724">
    <property type="component" value="Unplaced"/>
</dbReference>
<dbReference type="Proteomes" id="UP000694725">
    <property type="component" value="Unplaced"/>
</dbReference>
<dbReference type="Proteomes" id="UP000694726">
    <property type="component" value="Unplaced"/>
</dbReference>
<dbReference type="Proteomes" id="UP000694727">
    <property type="component" value="Unplaced"/>
</dbReference>
<dbReference type="Proteomes" id="UP000694728">
    <property type="component" value="Unplaced"/>
</dbReference>
<dbReference type="GO" id="GO:0016020">
    <property type="term" value="C:membrane"/>
    <property type="evidence" value="ECO:0000318"/>
    <property type="project" value="GO_Central"/>
</dbReference>
<dbReference type="GO" id="GO:0005741">
    <property type="term" value="C:mitochondrial outer membrane"/>
    <property type="evidence" value="ECO:0000250"/>
    <property type="project" value="UniProtKB"/>
</dbReference>
<dbReference type="GO" id="GO:0005886">
    <property type="term" value="C:plasma membrane"/>
    <property type="evidence" value="ECO:0000250"/>
    <property type="project" value="UniProtKB"/>
</dbReference>
<dbReference type="GO" id="GO:0015297">
    <property type="term" value="F:antiporter activity"/>
    <property type="evidence" value="ECO:0007669"/>
    <property type="project" value="UniProtKB-KW"/>
</dbReference>
<dbReference type="GO" id="GO:0015220">
    <property type="term" value="F:choline transmembrane transporter activity"/>
    <property type="evidence" value="ECO:0000250"/>
    <property type="project" value="UniProtKB"/>
</dbReference>
<dbReference type="GO" id="GO:0034228">
    <property type="term" value="F:ethanolamine transmembrane transporter activity"/>
    <property type="evidence" value="ECO:0000250"/>
    <property type="project" value="UniProtKB"/>
</dbReference>
<dbReference type="GO" id="GO:0022857">
    <property type="term" value="F:transmembrane transporter activity"/>
    <property type="evidence" value="ECO:0000318"/>
    <property type="project" value="GO_Central"/>
</dbReference>
<dbReference type="GO" id="GO:0015871">
    <property type="term" value="P:choline transport"/>
    <property type="evidence" value="ECO:0000250"/>
    <property type="project" value="UniProtKB"/>
</dbReference>
<dbReference type="GO" id="GO:0034229">
    <property type="term" value="P:ethanolamine transport"/>
    <property type="evidence" value="ECO:0000250"/>
    <property type="project" value="UniProtKB"/>
</dbReference>
<dbReference type="GO" id="GO:0055085">
    <property type="term" value="P:transmembrane transport"/>
    <property type="evidence" value="ECO:0000318"/>
    <property type="project" value="GO_Central"/>
</dbReference>
<dbReference type="InterPro" id="IPR007603">
    <property type="entry name" value="Choline_transptr-like"/>
</dbReference>
<dbReference type="PANTHER" id="PTHR12385">
    <property type="entry name" value="CHOLINE TRANSPORTER-LIKE (SLC FAMILY 44)"/>
    <property type="match status" value="1"/>
</dbReference>
<dbReference type="PANTHER" id="PTHR12385:SF34">
    <property type="entry name" value="CHOLINE TRANSPORTER-LIKE PROTEIN 2"/>
    <property type="match status" value="1"/>
</dbReference>
<dbReference type="Pfam" id="PF04515">
    <property type="entry name" value="Choline_transpo"/>
    <property type="match status" value="1"/>
</dbReference>
<accession>F1S584</accession>
<gene>
    <name type="primary">SLC44A2</name>
    <name type="synonym">CTL2</name>
</gene>